<gene>
    <name type="primary">BTG1</name>
</gene>
<reference key="1">
    <citation type="journal article" date="1992" name="EMBO J.">
        <title>BTG1, a member of a new family of antiproliferative genes.</title>
        <authorList>
            <person name="Rouault J.-P."/>
            <person name="Rimokh R."/>
            <person name="Tessa C."/>
            <person name="Paranhos G."/>
            <person name="Ffrench M."/>
            <person name="Duret L."/>
            <person name="Garoccio M."/>
            <person name="Germain D."/>
            <person name="Samarut J."/>
            <person name="Magaud J.-P."/>
        </authorList>
    </citation>
    <scope>NUCLEOTIDE SEQUENCE [MRNA]</scope>
    <scope>FUNCTION</scope>
    <scope>DEVELOPMENTAL STAGE</scope>
    <source>
        <tissue>Lymphoblastoma</tissue>
    </source>
</reference>
<reference key="2">
    <citation type="submission" date="2003-05" db="EMBL/GenBank/DDBJ databases">
        <title>Cloning of human full-length CDSs in BD Creator(TM) system donor vector.</title>
        <authorList>
            <person name="Kalnine N."/>
            <person name="Chen X."/>
            <person name="Rolfs A."/>
            <person name="Halleck A."/>
            <person name="Hines L."/>
            <person name="Eisenstein S."/>
            <person name="Koundinya M."/>
            <person name="Raphael J."/>
            <person name="Moreira D."/>
            <person name="Kelley T."/>
            <person name="LaBaer J."/>
            <person name="Lin Y."/>
            <person name="Phelan M."/>
            <person name="Farmer A."/>
        </authorList>
    </citation>
    <scope>NUCLEOTIDE SEQUENCE [LARGE SCALE MRNA]</scope>
</reference>
<reference key="3">
    <citation type="submission" date="2004-12" db="EMBL/GenBank/DDBJ databases">
        <authorList>
            <consortium name="NIEHS SNPs program"/>
        </authorList>
    </citation>
    <scope>NUCLEOTIDE SEQUENCE [GENOMIC DNA]</scope>
    <scope>VARIANTS SER-139 AND GLU-141</scope>
</reference>
<reference key="4">
    <citation type="journal article" date="2004" name="Genome Res.">
        <title>The status, quality, and expansion of the NIH full-length cDNA project: the Mammalian Gene Collection (MGC).</title>
        <authorList>
            <consortium name="The MGC Project Team"/>
        </authorList>
    </citation>
    <scope>NUCLEOTIDE SEQUENCE [LARGE SCALE MRNA]</scope>
    <source>
        <tissue>Colon</tissue>
        <tissue>Skin</tissue>
    </source>
</reference>
<reference key="5">
    <citation type="journal article" date="1998" name="J. Biol. Chem.">
        <title>Interaction of BTG1 and p53-regulated BTG2 gene products with mCaf1, the murine homolog of a component of the yeast CCR4 transcriptional regulatory complex.</title>
        <authorList>
            <person name="Rouault J.P."/>
            <person name="Prevot D."/>
            <person name="Berthet C."/>
            <person name="Birot A.M."/>
            <person name="Billaud M."/>
            <person name="Magaud J.P."/>
            <person name="Corbo L."/>
        </authorList>
    </citation>
    <scope>INTERACTION WITH CNOT7</scope>
</reference>
<reference key="6">
    <citation type="journal article" date="2001" name="J. Biol. Chem.">
        <title>Relationships of the antiproliferative proteins BTG1 and BTG2 with CAF1, the human homolog of a component of the yeast CCR4 transcriptional complex: involvement in estrogen receptor alpha signaling pathway.</title>
        <authorList>
            <person name="Prevot D."/>
            <person name="Morel A.P."/>
            <person name="Voeltzel T."/>
            <person name="Rostan M.C."/>
            <person name="Rimokh R."/>
            <person name="Magaud J.P."/>
            <person name="Corbo L."/>
        </authorList>
    </citation>
    <scope>INTERACTION WITH CNOT8</scope>
</reference>
<reference key="7">
    <citation type="journal article" date="1991" name="Genes Chromosomes Cancer">
        <title>A chromosome 12 coding region is juxtaposed to the MYC protooncogene locus in a t(8;12)(q24;q22) translocation in a case of B-cell chronic lymphocytic leukemia.</title>
        <authorList>
            <person name="Rimokh R."/>
            <person name="Rouault J.P."/>
            <person name="Wahbi K."/>
            <person name="Gadoux M."/>
            <person name="Lafage M."/>
            <person name="Archimbaud E."/>
            <person name="Charrin C."/>
            <person name="Gentilhomme O."/>
            <person name="Germain D."/>
            <person name="Samarut J."/>
        </authorList>
    </citation>
    <scope>CHROMOSOMAL TRANSLOCATION WITH MYC</scope>
</reference>
<reference key="8">
    <citation type="journal article" date="2013" name="J. Proteome Res.">
        <title>Toward a comprehensive characterization of a human cancer cell phosphoproteome.</title>
        <authorList>
            <person name="Zhou H."/>
            <person name="Di Palma S."/>
            <person name="Preisinger C."/>
            <person name="Peng M."/>
            <person name="Polat A.N."/>
            <person name="Heck A.J."/>
            <person name="Mohammed S."/>
        </authorList>
    </citation>
    <scope>PHOSPHORYLATION [LARGE SCALE ANALYSIS] AT SER-159</scope>
    <scope>IDENTIFICATION BY MASS SPECTROMETRY [LARGE SCALE ANALYSIS]</scope>
    <source>
        <tissue>Erythroleukemia</tissue>
    </source>
</reference>
<proteinExistence type="evidence at protein level"/>
<comment type="function">
    <text evidence="2">Anti-proliferative protein.</text>
</comment>
<comment type="subunit">
    <text evidence="1 4">Interacts with CNOT7 and CNOT8.</text>
</comment>
<comment type="interaction">
    <interactant intactId="EBI-742279">
        <id>P62324</id>
    </interactant>
    <interactant intactId="EBI-2105113">
        <id>Q9UIV1</id>
        <label>CNOT7</label>
    </interactant>
    <organismsDiffer>false</organismsDiffer>
    <experiments>4</experiments>
</comment>
<comment type="interaction">
    <interactant intactId="EBI-742279">
        <id>P62324</id>
    </interactant>
    <interactant intactId="EBI-742299">
        <id>Q9UFF9</id>
        <label>CNOT8</label>
    </interactant>
    <organismsDiffer>false</organismsDiffer>
    <experiments>6</experiments>
</comment>
<comment type="interaction">
    <interactant intactId="EBI-742279">
        <id>P62324</id>
    </interactant>
    <interactant intactId="EBI-494804">
        <id>Q13158</id>
        <label>FADD</label>
    </interactant>
    <organismsDiffer>false</organismsDiffer>
    <experiments>5</experiments>
</comment>
<comment type="interaction">
    <interactant intactId="EBI-742279">
        <id>P62324</id>
    </interactant>
    <interactant intactId="EBI-401755">
        <id>P62993</id>
        <label>GRB2</label>
    </interactant>
    <organismsDiffer>false</organismsDiffer>
    <experiments>3</experiments>
</comment>
<comment type="interaction">
    <interactant intactId="EBI-742279">
        <id>P62324</id>
    </interactant>
    <interactant intactId="EBI-713635">
        <id>O43639</id>
        <label>NCK2</label>
    </interactant>
    <organismsDiffer>false</organismsDiffer>
    <experiments>3</experiments>
</comment>
<comment type="interaction">
    <interactant intactId="EBI-742279">
        <id>P62324</id>
    </interactant>
    <interactant intactId="EBI-2104739">
        <id>Q60809</id>
        <label>Cnot7</label>
    </interactant>
    <organismsDiffer>true</organismsDiffer>
    <experiments>5</experiments>
</comment>
<comment type="developmental stage">
    <text evidence="2">Its expression is associated with the early G1 phase of the cell cycle.</text>
</comment>
<comment type="disease">
    <text evidence="3">A chromosomal aberration involving BTG1 may be a cause of a form of B-cell chronic lymphocytic leukemia. Translocation t(8;12)(q24;q22) with MYC.</text>
</comment>
<comment type="similarity">
    <text evidence="6">Belongs to the BTG family.</text>
</comment>
<feature type="chain" id="PRO_0000143800" description="Protein BTG1">
    <location>
        <begin position="1"/>
        <end position="171"/>
    </location>
</feature>
<feature type="modified residue" description="Phosphoserine" evidence="7">
    <location>
        <position position="159"/>
    </location>
</feature>
<feature type="sequence variant" id="VAR_021345" description="In dbSNP:rs28399541." evidence="5">
    <original>N</original>
    <variation>S</variation>
    <location>
        <position position="139"/>
    </location>
</feature>
<feature type="sequence variant" id="VAR_021346" description="In dbSNP:rs28399542." evidence="5">
    <original>Q</original>
    <variation>E</variation>
    <location>
        <position position="141"/>
    </location>
</feature>
<organism>
    <name type="scientific">Homo sapiens</name>
    <name type="common">Human</name>
    <dbReference type="NCBI Taxonomy" id="9606"/>
    <lineage>
        <taxon>Eukaryota</taxon>
        <taxon>Metazoa</taxon>
        <taxon>Chordata</taxon>
        <taxon>Craniata</taxon>
        <taxon>Vertebrata</taxon>
        <taxon>Euteleostomi</taxon>
        <taxon>Mammalia</taxon>
        <taxon>Eutheria</taxon>
        <taxon>Euarchontoglires</taxon>
        <taxon>Primates</taxon>
        <taxon>Haplorrhini</taxon>
        <taxon>Catarrhini</taxon>
        <taxon>Hominidae</taxon>
        <taxon>Homo</taxon>
    </lineage>
</organism>
<sequence length="171" mass="19209">MHPFYTRAATMIGEIAAAVSFISKFLRTKGLTSERQLQTFSQSLQELLAEHYKHHWFPEKPCKGSGYRCIRINHKMDPLIGQAAQRIGLSSQELFRLLPSELTLWVDPYEVSYRIGEDGSICVLYEASPAGGSTQNSTNVQMVDSRISCKEELLLGRTSPSKNYNMMTVSG</sequence>
<protein>
    <recommendedName>
        <fullName>Protein BTG1</fullName>
    </recommendedName>
    <alternativeName>
        <fullName>B-cell translocation gene 1 protein</fullName>
    </alternativeName>
</protein>
<evidence type="ECO:0000269" key="1">
    <source>
    </source>
</evidence>
<evidence type="ECO:0000269" key="2">
    <source>
    </source>
</evidence>
<evidence type="ECO:0000269" key="3">
    <source>
    </source>
</evidence>
<evidence type="ECO:0000269" key="4">
    <source>
    </source>
</evidence>
<evidence type="ECO:0000269" key="5">
    <source ref="3"/>
</evidence>
<evidence type="ECO:0000305" key="6"/>
<evidence type="ECO:0007744" key="7">
    <source>
    </source>
</evidence>
<keyword id="KW-0160">Chromosomal rearrangement</keyword>
<keyword id="KW-0597">Phosphoprotein</keyword>
<keyword id="KW-1267">Proteomics identification</keyword>
<keyword id="KW-0656">Proto-oncogene</keyword>
<keyword id="KW-1185">Reference proteome</keyword>
<name>BTG1_HUMAN</name>
<dbReference type="EMBL" id="X61123">
    <property type="protein sequence ID" value="CAA43435.1"/>
    <property type="molecule type" value="mRNA"/>
</dbReference>
<dbReference type="EMBL" id="BT019840">
    <property type="protein sequence ID" value="AAV38643.1"/>
    <property type="molecule type" value="mRNA"/>
</dbReference>
<dbReference type="EMBL" id="AY850133">
    <property type="protein sequence ID" value="AAV97814.1"/>
    <property type="molecule type" value="Genomic_DNA"/>
</dbReference>
<dbReference type="EMBL" id="BC016759">
    <property type="protein sequence ID" value="AAH16759.1"/>
    <property type="molecule type" value="mRNA"/>
</dbReference>
<dbReference type="EMBL" id="BC064953">
    <property type="protein sequence ID" value="AAH64953.1"/>
    <property type="molecule type" value="mRNA"/>
</dbReference>
<dbReference type="CCDS" id="CCDS9043.1"/>
<dbReference type="PIR" id="S20947">
    <property type="entry name" value="S20947"/>
</dbReference>
<dbReference type="RefSeq" id="NP_001722.1">
    <property type="nucleotide sequence ID" value="NM_001731.3"/>
</dbReference>
<dbReference type="SMR" id="P62324"/>
<dbReference type="BioGRID" id="107159">
    <property type="interactions" value="22"/>
</dbReference>
<dbReference type="FunCoup" id="P62324">
    <property type="interactions" value="2915"/>
</dbReference>
<dbReference type="IntAct" id="P62324">
    <property type="interactions" value="10"/>
</dbReference>
<dbReference type="MINT" id="P62324"/>
<dbReference type="STRING" id="9606.ENSP00000256015"/>
<dbReference type="iPTMnet" id="P62324"/>
<dbReference type="PhosphoSitePlus" id="P62324"/>
<dbReference type="BioMuta" id="BTG1"/>
<dbReference type="DMDM" id="59799172"/>
<dbReference type="jPOST" id="P62324"/>
<dbReference type="MassIVE" id="P62324"/>
<dbReference type="PaxDb" id="9606-ENSP00000256015"/>
<dbReference type="PeptideAtlas" id="P62324"/>
<dbReference type="ProteomicsDB" id="57394"/>
<dbReference type="Pumba" id="P62324"/>
<dbReference type="Antibodypedia" id="1186">
    <property type="antibodies" value="227 antibodies from 29 providers"/>
</dbReference>
<dbReference type="DNASU" id="694"/>
<dbReference type="Ensembl" id="ENST00000256015.5">
    <property type="protein sequence ID" value="ENSP00000256015.3"/>
    <property type="gene ID" value="ENSG00000133639.6"/>
</dbReference>
<dbReference type="GeneID" id="694"/>
<dbReference type="KEGG" id="hsa:694"/>
<dbReference type="MANE-Select" id="ENST00000256015.5">
    <property type="protein sequence ID" value="ENSP00000256015.3"/>
    <property type="RefSeq nucleotide sequence ID" value="NM_001731.3"/>
    <property type="RefSeq protein sequence ID" value="NP_001722.1"/>
</dbReference>
<dbReference type="AGR" id="HGNC:1130"/>
<dbReference type="CTD" id="694"/>
<dbReference type="DisGeNET" id="694"/>
<dbReference type="GeneCards" id="BTG1"/>
<dbReference type="HGNC" id="HGNC:1130">
    <property type="gene designation" value="BTG1"/>
</dbReference>
<dbReference type="HPA" id="ENSG00000133639">
    <property type="expression patterns" value="Low tissue specificity"/>
</dbReference>
<dbReference type="MalaCards" id="BTG1"/>
<dbReference type="MIM" id="109580">
    <property type="type" value="gene"/>
</dbReference>
<dbReference type="neXtProt" id="NX_P62324"/>
<dbReference type="OpenTargets" id="ENSG00000133639"/>
<dbReference type="PharmGKB" id="PA25450"/>
<dbReference type="VEuPathDB" id="HostDB:ENSG00000133639"/>
<dbReference type="eggNOG" id="KOG4006">
    <property type="taxonomic scope" value="Eukaryota"/>
</dbReference>
<dbReference type="GeneTree" id="ENSGT00950000182952"/>
<dbReference type="HOGENOM" id="CLU_079660_4_0_1"/>
<dbReference type="InParanoid" id="P62324"/>
<dbReference type="OMA" id="SHWFPDK"/>
<dbReference type="OrthoDB" id="19928at2759"/>
<dbReference type="PAN-GO" id="P62324">
    <property type="GO annotations" value="4 GO annotations based on evolutionary models"/>
</dbReference>
<dbReference type="PhylomeDB" id="P62324"/>
<dbReference type="TreeFam" id="TF105272"/>
<dbReference type="PathwayCommons" id="P62324"/>
<dbReference type="Reactome" id="R-HSA-9617828">
    <property type="pathway name" value="FOXO-mediated transcription of cell cycle genes"/>
</dbReference>
<dbReference type="SignaLink" id="P62324"/>
<dbReference type="SIGNOR" id="P62324"/>
<dbReference type="BioGRID-ORCS" id="694">
    <property type="hits" value="23 hits in 1157 CRISPR screens"/>
</dbReference>
<dbReference type="ChiTaRS" id="BTG1">
    <property type="organism name" value="human"/>
</dbReference>
<dbReference type="GeneWiki" id="BTG1"/>
<dbReference type="GenomeRNAi" id="694"/>
<dbReference type="Pharos" id="P62324">
    <property type="development level" value="Tbio"/>
</dbReference>
<dbReference type="PRO" id="PR:P62324"/>
<dbReference type="Proteomes" id="UP000005640">
    <property type="component" value="Chromosome 12"/>
</dbReference>
<dbReference type="RNAct" id="P62324">
    <property type="molecule type" value="protein"/>
</dbReference>
<dbReference type="Bgee" id="ENSG00000133639">
    <property type="expression patterns" value="Expressed in lower lobe of lung and 219 other cell types or tissues"/>
</dbReference>
<dbReference type="ExpressionAtlas" id="P62324">
    <property type="expression patterns" value="baseline and differential"/>
</dbReference>
<dbReference type="GO" id="GO:0005737">
    <property type="term" value="C:cytoplasm"/>
    <property type="evidence" value="ECO:0000314"/>
    <property type="project" value="MGI"/>
</dbReference>
<dbReference type="GO" id="GO:0005654">
    <property type="term" value="C:nucleoplasm"/>
    <property type="evidence" value="ECO:0000304"/>
    <property type="project" value="Reactome"/>
</dbReference>
<dbReference type="GO" id="GO:0005634">
    <property type="term" value="C:nucleus"/>
    <property type="evidence" value="ECO:0000314"/>
    <property type="project" value="UniProtKB"/>
</dbReference>
<dbReference type="GO" id="GO:0019899">
    <property type="term" value="F:enzyme binding"/>
    <property type="evidence" value="ECO:0000353"/>
    <property type="project" value="UniProtKB"/>
</dbReference>
<dbReference type="GO" id="GO:0019900">
    <property type="term" value="F:kinase binding"/>
    <property type="evidence" value="ECO:0000303"/>
    <property type="project" value="UniProtKB"/>
</dbReference>
<dbReference type="GO" id="GO:0003712">
    <property type="term" value="F:transcription coregulator activity"/>
    <property type="evidence" value="ECO:0000303"/>
    <property type="project" value="UniProtKB"/>
</dbReference>
<dbReference type="GO" id="GO:0016477">
    <property type="term" value="P:cell migration"/>
    <property type="evidence" value="ECO:0000303"/>
    <property type="project" value="UniProtKB"/>
</dbReference>
<dbReference type="GO" id="GO:0008283">
    <property type="term" value="P:cell population proliferation"/>
    <property type="evidence" value="ECO:0007669"/>
    <property type="project" value="Ensembl"/>
</dbReference>
<dbReference type="GO" id="GO:0030308">
    <property type="term" value="P:negative regulation of cell growth"/>
    <property type="evidence" value="ECO:0000303"/>
    <property type="project" value="UniProtKB"/>
</dbReference>
<dbReference type="GO" id="GO:0008285">
    <property type="term" value="P:negative regulation of cell population proliferation"/>
    <property type="evidence" value="ECO:0000314"/>
    <property type="project" value="UniProtKB"/>
</dbReference>
<dbReference type="GO" id="GO:0045766">
    <property type="term" value="P:positive regulation of angiogenesis"/>
    <property type="evidence" value="ECO:0000315"/>
    <property type="project" value="UniProtKB"/>
</dbReference>
<dbReference type="GO" id="GO:0045603">
    <property type="term" value="P:positive regulation of endothelial cell differentiation"/>
    <property type="evidence" value="ECO:0000315"/>
    <property type="project" value="UniProtKB"/>
</dbReference>
<dbReference type="GO" id="GO:2000271">
    <property type="term" value="P:positive regulation of fibroblast apoptotic process"/>
    <property type="evidence" value="ECO:0000315"/>
    <property type="project" value="UniProtKB"/>
</dbReference>
<dbReference type="GO" id="GO:0045663">
    <property type="term" value="P:positive regulation of myoblast differentiation"/>
    <property type="evidence" value="ECO:0000314"/>
    <property type="project" value="MGI"/>
</dbReference>
<dbReference type="GO" id="GO:0006355">
    <property type="term" value="P:regulation of DNA-templated transcription"/>
    <property type="evidence" value="ECO:0000303"/>
    <property type="project" value="UniProtKB"/>
</dbReference>
<dbReference type="GO" id="GO:0006979">
    <property type="term" value="P:response to oxidative stress"/>
    <property type="evidence" value="ECO:0007669"/>
    <property type="project" value="Ensembl"/>
</dbReference>
<dbReference type="GO" id="GO:0043434">
    <property type="term" value="P:response to peptide hormone"/>
    <property type="evidence" value="ECO:0007669"/>
    <property type="project" value="Ensembl"/>
</dbReference>
<dbReference type="GO" id="GO:0007283">
    <property type="term" value="P:spermatogenesis"/>
    <property type="evidence" value="ECO:0007669"/>
    <property type="project" value="Ensembl"/>
</dbReference>
<dbReference type="FunFam" id="3.90.640.90:FF:000003">
    <property type="entry name" value="BTG1 isoform 1"/>
    <property type="match status" value="1"/>
</dbReference>
<dbReference type="Gene3D" id="3.90.640.90">
    <property type="entry name" value="Anti-proliferative protein, N-terminal domain"/>
    <property type="match status" value="1"/>
</dbReference>
<dbReference type="InterPro" id="IPR002087">
    <property type="entry name" value="Anti_prolifrtn"/>
</dbReference>
<dbReference type="InterPro" id="IPR033332">
    <property type="entry name" value="BTG"/>
</dbReference>
<dbReference type="InterPro" id="IPR036054">
    <property type="entry name" value="BTG-like_sf"/>
</dbReference>
<dbReference type="PANTHER" id="PTHR22978">
    <property type="entry name" value="B-CELL TRANSLOCATION GENE"/>
    <property type="match status" value="1"/>
</dbReference>
<dbReference type="PANTHER" id="PTHR22978:SF30">
    <property type="entry name" value="PROTEIN BTG1"/>
    <property type="match status" value="1"/>
</dbReference>
<dbReference type="Pfam" id="PF07742">
    <property type="entry name" value="BTG"/>
    <property type="match status" value="1"/>
</dbReference>
<dbReference type="PRINTS" id="PR00310">
    <property type="entry name" value="ANTIPRLFBTG1"/>
</dbReference>
<dbReference type="SMART" id="SM00099">
    <property type="entry name" value="btg1"/>
    <property type="match status" value="1"/>
</dbReference>
<dbReference type="SUPFAM" id="SSF160696">
    <property type="entry name" value="BTG domain-like"/>
    <property type="match status" value="1"/>
</dbReference>
<dbReference type="PROSITE" id="PS00960">
    <property type="entry name" value="BTG_1"/>
    <property type="match status" value="1"/>
</dbReference>
<dbReference type="PROSITE" id="PS01203">
    <property type="entry name" value="BTG_2"/>
    <property type="match status" value="1"/>
</dbReference>
<accession>P62324</accession>
<accession>P31607</accession>